<proteinExistence type="inferred from homology"/>
<protein>
    <recommendedName>
        <fullName evidence="1">tRNA dimethylallyltransferase</fullName>
        <ecNumber evidence="1">2.5.1.75</ecNumber>
    </recommendedName>
    <alternativeName>
        <fullName evidence="1">Dimethylallyl diphosphate:tRNA dimethylallyltransferase</fullName>
        <shortName evidence="1">DMAPP:tRNA dimethylallyltransferase</shortName>
        <shortName evidence="1">DMATase</shortName>
    </alternativeName>
    <alternativeName>
        <fullName evidence="1">Isopentenyl-diphosphate:tRNA isopentenyltransferase</fullName>
        <shortName evidence="1">IPP transferase</shortName>
        <shortName evidence="1">IPPT</shortName>
        <shortName evidence="1">IPTase</shortName>
    </alternativeName>
</protein>
<accession>B7NTM7</accession>
<reference key="1">
    <citation type="journal article" date="2009" name="PLoS Genet.">
        <title>Organised genome dynamics in the Escherichia coli species results in highly diverse adaptive paths.</title>
        <authorList>
            <person name="Touchon M."/>
            <person name="Hoede C."/>
            <person name="Tenaillon O."/>
            <person name="Barbe V."/>
            <person name="Baeriswyl S."/>
            <person name="Bidet P."/>
            <person name="Bingen E."/>
            <person name="Bonacorsi S."/>
            <person name="Bouchier C."/>
            <person name="Bouvet O."/>
            <person name="Calteau A."/>
            <person name="Chiapello H."/>
            <person name="Clermont O."/>
            <person name="Cruveiller S."/>
            <person name="Danchin A."/>
            <person name="Diard M."/>
            <person name="Dossat C."/>
            <person name="Karoui M.E."/>
            <person name="Frapy E."/>
            <person name="Garry L."/>
            <person name="Ghigo J.M."/>
            <person name="Gilles A.M."/>
            <person name="Johnson J."/>
            <person name="Le Bouguenec C."/>
            <person name="Lescat M."/>
            <person name="Mangenot S."/>
            <person name="Martinez-Jehanne V."/>
            <person name="Matic I."/>
            <person name="Nassif X."/>
            <person name="Oztas S."/>
            <person name="Petit M.A."/>
            <person name="Pichon C."/>
            <person name="Rouy Z."/>
            <person name="Ruf C.S."/>
            <person name="Schneider D."/>
            <person name="Tourret J."/>
            <person name="Vacherie B."/>
            <person name="Vallenet D."/>
            <person name="Medigue C."/>
            <person name="Rocha E.P.C."/>
            <person name="Denamur E."/>
        </authorList>
    </citation>
    <scope>NUCLEOTIDE SEQUENCE [LARGE SCALE GENOMIC DNA]</scope>
    <source>
        <strain>IAI39 / ExPEC</strain>
    </source>
</reference>
<evidence type="ECO:0000255" key="1">
    <source>
        <dbReference type="HAMAP-Rule" id="MF_00185"/>
    </source>
</evidence>
<feature type="chain" id="PRO_1000118525" description="tRNA dimethylallyltransferase">
    <location>
        <begin position="1"/>
        <end position="316"/>
    </location>
</feature>
<feature type="region of interest" description="Interaction with substrate tRNA" evidence="1">
    <location>
        <begin position="42"/>
        <end position="45"/>
    </location>
</feature>
<feature type="region of interest" description="Interaction with substrate tRNA" evidence="1">
    <location>
        <begin position="166"/>
        <end position="170"/>
    </location>
</feature>
<feature type="region of interest" description="Interaction with substrate tRNA" evidence="1">
    <location>
        <begin position="247"/>
        <end position="252"/>
    </location>
</feature>
<feature type="region of interest" description="Interaction with substrate tRNA" evidence="1">
    <location>
        <begin position="280"/>
        <end position="287"/>
    </location>
</feature>
<feature type="binding site" evidence="1">
    <location>
        <begin position="17"/>
        <end position="24"/>
    </location>
    <ligand>
        <name>ATP</name>
        <dbReference type="ChEBI" id="CHEBI:30616"/>
    </ligand>
</feature>
<feature type="binding site" evidence="1">
    <location>
        <begin position="19"/>
        <end position="24"/>
    </location>
    <ligand>
        <name>substrate</name>
    </ligand>
</feature>
<feature type="site" description="Interaction with substrate tRNA" evidence="1">
    <location>
        <position position="108"/>
    </location>
</feature>
<feature type="site" description="Interaction with substrate tRNA" evidence="1">
    <location>
        <position position="130"/>
    </location>
</feature>
<sequence length="316" mass="35079">MSDISKASLPKAIFLMGPTASGKTALAIELRKILPVELISVDSALIYKGMDIGTAKPNAEELLAAPHRLLDIRDPSQAYSAADFRRDALAEMADITAAGRIPLLVGGTMLYFKALLEGLSPLPSADPEVRARIEQQAAEQGWESLHRQLQEIDPVAAARIHPNDPQRLSRALEVFFISGKTLTELTQTSGDALPYQVHQFAIAPASRELLHQRIEQRFHQMLASGFEAEVRALFARGDLHTDLPSIRCVGYRQMWSYLEGEISYDEMVYRGVCATRQLAKRQITWLRGWEGVHWLDSEKPEQARDEVLQVVGAIAG</sequence>
<organism>
    <name type="scientific">Escherichia coli O7:K1 (strain IAI39 / ExPEC)</name>
    <dbReference type="NCBI Taxonomy" id="585057"/>
    <lineage>
        <taxon>Bacteria</taxon>
        <taxon>Pseudomonadati</taxon>
        <taxon>Pseudomonadota</taxon>
        <taxon>Gammaproteobacteria</taxon>
        <taxon>Enterobacterales</taxon>
        <taxon>Enterobacteriaceae</taxon>
        <taxon>Escherichia</taxon>
    </lineage>
</organism>
<dbReference type="EC" id="2.5.1.75" evidence="1"/>
<dbReference type="EMBL" id="CU928164">
    <property type="protein sequence ID" value="CAR20734.1"/>
    <property type="molecule type" value="Genomic_DNA"/>
</dbReference>
<dbReference type="RefSeq" id="WP_001280339.1">
    <property type="nucleotide sequence ID" value="NC_011750.1"/>
</dbReference>
<dbReference type="RefSeq" id="YP_002410497.1">
    <property type="nucleotide sequence ID" value="NC_011750.1"/>
</dbReference>
<dbReference type="SMR" id="B7NTM7"/>
<dbReference type="STRING" id="585057.ECIAI39_4636"/>
<dbReference type="GeneID" id="75169691"/>
<dbReference type="KEGG" id="ect:ECIAI39_4636"/>
<dbReference type="PATRIC" id="fig|585057.6.peg.4782"/>
<dbReference type="HOGENOM" id="CLU_032616_0_0_6"/>
<dbReference type="Proteomes" id="UP000000749">
    <property type="component" value="Chromosome"/>
</dbReference>
<dbReference type="GO" id="GO:0005524">
    <property type="term" value="F:ATP binding"/>
    <property type="evidence" value="ECO:0007669"/>
    <property type="project" value="UniProtKB-UniRule"/>
</dbReference>
<dbReference type="GO" id="GO:0052381">
    <property type="term" value="F:tRNA dimethylallyltransferase activity"/>
    <property type="evidence" value="ECO:0007669"/>
    <property type="project" value="UniProtKB-UniRule"/>
</dbReference>
<dbReference type="GO" id="GO:0006400">
    <property type="term" value="P:tRNA modification"/>
    <property type="evidence" value="ECO:0007669"/>
    <property type="project" value="TreeGrafter"/>
</dbReference>
<dbReference type="FunFam" id="1.10.20.140:FF:000001">
    <property type="entry name" value="tRNA dimethylallyltransferase"/>
    <property type="match status" value="1"/>
</dbReference>
<dbReference type="FunFam" id="1.10.287.890:FF:000001">
    <property type="entry name" value="tRNA dimethylallyltransferase"/>
    <property type="match status" value="1"/>
</dbReference>
<dbReference type="Gene3D" id="1.10.20.140">
    <property type="match status" value="1"/>
</dbReference>
<dbReference type="Gene3D" id="1.10.287.890">
    <property type="entry name" value="Crystal structure of tRNA isopentenylpyrophosphate transferase (bh2366) domain"/>
    <property type="match status" value="1"/>
</dbReference>
<dbReference type="Gene3D" id="3.40.50.300">
    <property type="entry name" value="P-loop containing nucleotide triphosphate hydrolases"/>
    <property type="match status" value="1"/>
</dbReference>
<dbReference type="HAMAP" id="MF_00185">
    <property type="entry name" value="IPP_trans"/>
    <property type="match status" value="1"/>
</dbReference>
<dbReference type="InterPro" id="IPR039657">
    <property type="entry name" value="Dimethylallyltransferase"/>
</dbReference>
<dbReference type="InterPro" id="IPR018022">
    <property type="entry name" value="IPT"/>
</dbReference>
<dbReference type="InterPro" id="IPR027417">
    <property type="entry name" value="P-loop_NTPase"/>
</dbReference>
<dbReference type="NCBIfam" id="TIGR00174">
    <property type="entry name" value="miaA"/>
    <property type="match status" value="1"/>
</dbReference>
<dbReference type="PANTHER" id="PTHR11088">
    <property type="entry name" value="TRNA DIMETHYLALLYLTRANSFERASE"/>
    <property type="match status" value="1"/>
</dbReference>
<dbReference type="PANTHER" id="PTHR11088:SF60">
    <property type="entry name" value="TRNA DIMETHYLALLYLTRANSFERASE"/>
    <property type="match status" value="1"/>
</dbReference>
<dbReference type="Pfam" id="PF01715">
    <property type="entry name" value="IPPT"/>
    <property type="match status" value="1"/>
</dbReference>
<dbReference type="SUPFAM" id="SSF52540">
    <property type="entry name" value="P-loop containing nucleoside triphosphate hydrolases"/>
    <property type="match status" value="1"/>
</dbReference>
<keyword id="KW-0067">ATP-binding</keyword>
<keyword id="KW-0460">Magnesium</keyword>
<keyword id="KW-0547">Nucleotide-binding</keyword>
<keyword id="KW-0808">Transferase</keyword>
<keyword id="KW-0819">tRNA processing</keyword>
<name>MIAA_ECO7I</name>
<comment type="function">
    <text evidence="1">Catalyzes the transfer of a dimethylallyl group onto the adenine at position 37 in tRNAs that read codons beginning with uridine, leading to the formation of N6-(dimethylallyl)adenosine (i(6)A).</text>
</comment>
<comment type="catalytic activity">
    <reaction evidence="1">
        <text>adenosine(37) in tRNA + dimethylallyl diphosphate = N(6)-dimethylallyladenosine(37) in tRNA + diphosphate</text>
        <dbReference type="Rhea" id="RHEA:26482"/>
        <dbReference type="Rhea" id="RHEA-COMP:10162"/>
        <dbReference type="Rhea" id="RHEA-COMP:10375"/>
        <dbReference type="ChEBI" id="CHEBI:33019"/>
        <dbReference type="ChEBI" id="CHEBI:57623"/>
        <dbReference type="ChEBI" id="CHEBI:74411"/>
        <dbReference type="ChEBI" id="CHEBI:74415"/>
        <dbReference type="EC" id="2.5.1.75"/>
    </reaction>
</comment>
<comment type="cofactor">
    <cofactor evidence="1">
        <name>Mg(2+)</name>
        <dbReference type="ChEBI" id="CHEBI:18420"/>
    </cofactor>
</comment>
<comment type="subunit">
    <text evidence="1">Monomer.</text>
</comment>
<comment type="similarity">
    <text evidence="1">Belongs to the IPP transferase family.</text>
</comment>
<gene>
    <name evidence="1" type="primary">miaA</name>
    <name type="ordered locus">ECIAI39_4636</name>
</gene>